<comment type="function">
    <text evidence="1">Specifically methylates the uridine in position 2552 of 23S rRNA at the 2'-O position of the ribose in the fully assembled 50S ribosomal subunit.</text>
</comment>
<comment type="catalytic activity">
    <reaction evidence="1">
        <text>uridine(2552) in 23S rRNA + S-adenosyl-L-methionine = 2'-O-methyluridine(2552) in 23S rRNA + S-adenosyl-L-homocysteine + H(+)</text>
        <dbReference type="Rhea" id="RHEA:42720"/>
        <dbReference type="Rhea" id="RHEA-COMP:10202"/>
        <dbReference type="Rhea" id="RHEA-COMP:10203"/>
        <dbReference type="ChEBI" id="CHEBI:15378"/>
        <dbReference type="ChEBI" id="CHEBI:57856"/>
        <dbReference type="ChEBI" id="CHEBI:59789"/>
        <dbReference type="ChEBI" id="CHEBI:65315"/>
        <dbReference type="ChEBI" id="CHEBI:74478"/>
        <dbReference type="EC" id="2.1.1.166"/>
    </reaction>
</comment>
<comment type="subcellular location">
    <subcellularLocation>
        <location evidence="1">Cytoplasm</location>
    </subcellularLocation>
</comment>
<comment type="similarity">
    <text evidence="1">Belongs to the class I-like SAM-binding methyltransferase superfamily. RNA methyltransferase RlmE family.</text>
</comment>
<sequence>MGKKDKRWVLQRKNDHYYNLAKKRNYRSRATYKLFQLNEKFNLIKERNVVVDLGCAPGGWLQAARDIVGDKGFIVGIDLQTVKPLPYENVIAIKGDMTKEEILKQARDLLPEKPDVIICDASPNISGVWDVDHARSLELTTMALMTATKMLKKGGNFVVKVFQGDLFEKYVQLVSEYFDKAFTTKPRASRDESAEVYVIGKRFNGRKFDMNSKSPIVKLLDTNPKENEITSPSLRKDISKEDSGLMIKRIKEMRSKKE</sequence>
<dbReference type="EC" id="2.1.1.166" evidence="1"/>
<dbReference type="EMBL" id="CP000609">
    <property type="protein sequence ID" value="ABO35306.1"/>
    <property type="molecule type" value="Genomic_DNA"/>
</dbReference>
<dbReference type="RefSeq" id="WP_011868759.1">
    <property type="nucleotide sequence ID" value="NC_009135.1"/>
</dbReference>
<dbReference type="SMR" id="A4FYM2"/>
<dbReference type="STRING" id="402880.MmarC5_1000"/>
<dbReference type="DNASU" id="4928139"/>
<dbReference type="GeneID" id="4928139"/>
<dbReference type="KEGG" id="mmq:MmarC5_1000"/>
<dbReference type="eggNOG" id="arCOG00079">
    <property type="taxonomic scope" value="Archaea"/>
</dbReference>
<dbReference type="HOGENOM" id="CLU_009422_4_4_2"/>
<dbReference type="OrthoDB" id="26307at2157"/>
<dbReference type="Proteomes" id="UP000000253">
    <property type="component" value="Chromosome"/>
</dbReference>
<dbReference type="GO" id="GO:0005737">
    <property type="term" value="C:cytoplasm"/>
    <property type="evidence" value="ECO:0007669"/>
    <property type="project" value="UniProtKB-SubCell"/>
</dbReference>
<dbReference type="GO" id="GO:0008650">
    <property type="term" value="F:rRNA (uridine-2'-O-)-methyltransferase activity"/>
    <property type="evidence" value="ECO:0007669"/>
    <property type="project" value="UniProtKB-UniRule"/>
</dbReference>
<dbReference type="Gene3D" id="3.40.50.150">
    <property type="entry name" value="Vaccinia Virus protein VP39"/>
    <property type="match status" value="1"/>
</dbReference>
<dbReference type="HAMAP" id="MF_01547">
    <property type="entry name" value="RNA_methyltr_E"/>
    <property type="match status" value="1"/>
</dbReference>
<dbReference type="InterPro" id="IPR050082">
    <property type="entry name" value="RNA_methyltr_RlmE"/>
</dbReference>
<dbReference type="InterPro" id="IPR002877">
    <property type="entry name" value="RNA_MeTrfase_FtsJ_dom"/>
</dbReference>
<dbReference type="InterPro" id="IPR015507">
    <property type="entry name" value="rRNA-MeTfrase_E"/>
</dbReference>
<dbReference type="InterPro" id="IPR029063">
    <property type="entry name" value="SAM-dependent_MTases_sf"/>
</dbReference>
<dbReference type="PANTHER" id="PTHR10920:SF13">
    <property type="entry name" value="PRE-RRNA 2'-O-RIBOSE RNA METHYLTRANSFERASE FTSJ3"/>
    <property type="match status" value="1"/>
</dbReference>
<dbReference type="PANTHER" id="PTHR10920">
    <property type="entry name" value="RIBOSOMAL RNA METHYLTRANSFERASE"/>
    <property type="match status" value="1"/>
</dbReference>
<dbReference type="Pfam" id="PF01728">
    <property type="entry name" value="FtsJ"/>
    <property type="match status" value="1"/>
</dbReference>
<dbReference type="PIRSF" id="PIRSF005461">
    <property type="entry name" value="23S_rRNA_mtase"/>
    <property type="match status" value="1"/>
</dbReference>
<dbReference type="SUPFAM" id="SSF53335">
    <property type="entry name" value="S-adenosyl-L-methionine-dependent methyltransferases"/>
    <property type="match status" value="1"/>
</dbReference>
<name>RLME_METM5</name>
<accession>A4FYM2</accession>
<feature type="chain" id="PRO_1000087692" description="Ribosomal RNA large subunit methyltransferase E">
    <location>
        <begin position="1"/>
        <end position="258"/>
    </location>
</feature>
<feature type="active site" description="Proton acceptor" evidence="1">
    <location>
        <position position="160"/>
    </location>
</feature>
<feature type="binding site" evidence="1">
    <location>
        <position position="58"/>
    </location>
    <ligand>
        <name>S-adenosyl-L-methionine</name>
        <dbReference type="ChEBI" id="CHEBI:59789"/>
    </ligand>
</feature>
<feature type="binding site" evidence="1">
    <location>
        <position position="60"/>
    </location>
    <ligand>
        <name>S-adenosyl-L-methionine</name>
        <dbReference type="ChEBI" id="CHEBI:59789"/>
    </ligand>
</feature>
<feature type="binding site" evidence="1">
    <location>
        <position position="78"/>
    </location>
    <ligand>
        <name>S-adenosyl-L-methionine</name>
        <dbReference type="ChEBI" id="CHEBI:59789"/>
    </ligand>
</feature>
<feature type="binding site" evidence="1">
    <location>
        <position position="96"/>
    </location>
    <ligand>
        <name>S-adenosyl-L-methionine</name>
        <dbReference type="ChEBI" id="CHEBI:59789"/>
    </ligand>
</feature>
<feature type="binding site" evidence="1">
    <location>
        <position position="120"/>
    </location>
    <ligand>
        <name>S-adenosyl-L-methionine</name>
        <dbReference type="ChEBI" id="CHEBI:59789"/>
    </ligand>
</feature>
<gene>
    <name evidence="1" type="primary">rlmE</name>
    <name evidence="1" type="synonym">rrmJ</name>
    <name type="ordered locus">MmarC5_1000</name>
</gene>
<organism>
    <name type="scientific">Methanococcus maripaludis (strain C5 / ATCC BAA-1333)</name>
    <dbReference type="NCBI Taxonomy" id="402880"/>
    <lineage>
        <taxon>Archaea</taxon>
        <taxon>Methanobacteriati</taxon>
        <taxon>Methanobacteriota</taxon>
        <taxon>Methanomada group</taxon>
        <taxon>Methanococci</taxon>
        <taxon>Methanococcales</taxon>
        <taxon>Methanococcaceae</taxon>
        <taxon>Methanococcus</taxon>
    </lineage>
</organism>
<reference key="1">
    <citation type="submission" date="2007-03" db="EMBL/GenBank/DDBJ databases">
        <title>Complete sequence of chromosome of Methanococcus maripaludis C5.</title>
        <authorList>
            <consortium name="US DOE Joint Genome Institute"/>
            <person name="Copeland A."/>
            <person name="Lucas S."/>
            <person name="Lapidus A."/>
            <person name="Barry K."/>
            <person name="Glavina del Rio T."/>
            <person name="Dalin E."/>
            <person name="Tice H."/>
            <person name="Pitluck S."/>
            <person name="Chertkov O."/>
            <person name="Brettin T."/>
            <person name="Bruce D."/>
            <person name="Han C."/>
            <person name="Detter J.C."/>
            <person name="Schmutz J."/>
            <person name="Larimer F."/>
            <person name="Land M."/>
            <person name="Hauser L."/>
            <person name="Kyrpides N."/>
            <person name="Mikhailova N."/>
            <person name="Sieprawska-Lupa M."/>
            <person name="Whitman W.B."/>
            <person name="Richardson P."/>
        </authorList>
    </citation>
    <scope>NUCLEOTIDE SEQUENCE [LARGE SCALE GENOMIC DNA]</scope>
    <source>
        <strain>C5 / ATCC BAA-1333</strain>
    </source>
</reference>
<proteinExistence type="inferred from homology"/>
<keyword id="KW-0963">Cytoplasm</keyword>
<keyword id="KW-0489">Methyltransferase</keyword>
<keyword id="KW-0698">rRNA processing</keyword>
<keyword id="KW-0949">S-adenosyl-L-methionine</keyword>
<keyword id="KW-0808">Transferase</keyword>
<evidence type="ECO:0000255" key="1">
    <source>
        <dbReference type="HAMAP-Rule" id="MF_01547"/>
    </source>
</evidence>
<protein>
    <recommendedName>
        <fullName evidence="1">Ribosomal RNA large subunit methyltransferase E</fullName>
        <ecNumber evidence="1">2.1.1.166</ecNumber>
    </recommendedName>
    <alternativeName>
        <fullName evidence="1">23S rRNA Um2552 methyltransferase</fullName>
    </alternativeName>
    <alternativeName>
        <fullName evidence="1">rRNA (uridine-2'-O-)-methyltransferase</fullName>
    </alternativeName>
</protein>